<proteinExistence type="inferred from homology"/>
<gene>
    <name evidence="2" type="primary">pncB</name>
    <name type="ordered locus">Z1279</name>
    <name type="ordered locus">ECs1014</name>
</gene>
<keyword id="KW-0436">Ligase</keyword>
<keyword id="KW-0597">Phosphoprotein</keyword>
<keyword id="KW-0662">Pyridine nucleotide biosynthesis</keyword>
<keyword id="KW-1185">Reference proteome</keyword>
<comment type="function">
    <text evidence="2">Catalyzes the synthesis of beta-nicotinate D-ribonucleotide from nicotinate and 5-phospho-D-ribose 1-phosphate at the expense of ATP.</text>
</comment>
<comment type="catalytic activity">
    <reaction evidence="2">
        <text>nicotinate + 5-phospho-alpha-D-ribose 1-diphosphate + ATP + H2O = nicotinate beta-D-ribonucleotide + ADP + phosphate + diphosphate</text>
        <dbReference type="Rhea" id="RHEA:36163"/>
        <dbReference type="ChEBI" id="CHEBI:15377"/>
        <dbReference type="ChEBI" id="CHEBI:30616"/>
        <dbReference type="ChEBI" id="CHEBI:32544"/>
        <dbReference type="ChEBI" id="CHEBI:33019"/>
        <dbReference type="ChEBI" id="CHEBI:43474"/>
        <dbReference type="ChEBI" id="CHEBI:57502"/>
        <dbReference type="ChEBI" id="CHEBI:58017"/>
        <dbReference type="ChEBI" id="CHEBI:456216"/>
        <dbReference type="EC" id="6.3.4.21"/>
    </reaction>
</comment>
<comment type="pathway">
    <text evidence="2">Cofactor biosynthesis; NAD(+) biosynthesis; nicotinate D-ribonucleotide from nicotinate: step 1/1.</text>
</comment>
<comment type="PTM">
    <text evidence="2">Transiently phosphorylated on a His residue during the reaction cycle. Phosphorylation strongly increases the affinity for substrates and increases the rate of nicotinate D-ribonucleotide production. Dephosphorylation regenerates the low-affinity form of the enzyme, leading to product release.</text>
</comment>
<comment type="similarity">
    <text evidence="2">Belongs to the NAPRTase family.</text>
</comment>
<evidence type="ECO:0000250" key="1"/>
<evidence type="ECO:0000255" key="2">
    <source>
        <dbReference type="HAMAP-Rule" id="MF_00570"/>
    </source>
</evidence>
<accession>Q8XDE8</accession>
<name>PNCB_ECO57</name>
<protein>
    <recommendedName>
        <fullName evidence="2">Nicotinate phosphoribosyltransferase</fullName>
        <shortName evidence="2">NAPRTase</shortName>
        <ecNumber evidence="2">6.3.4.21</ecNumber>
    </recommendedName>
</protein>
<sequence length="400" mass="45969">MTQFASPVLHSLLDTDAYKLHMQQAVFHHYYDVHVAAEFRCRGDDLLGIYADAIREQVQAMQHLRLQDDEYQWLSALPFFKADYLNWLREFRFNPEQVTVSNDNGKLDIRLSGPWREVILWEVPLLAVISEMVHRYRSPQADVAQALDTLESKLVDFSALTAGLDMSRFHLMDFGTRRRFSREVQETIVKRLQQESWFVGTSNYDLARRLSLTPMGTQAHEWFQAHQQISPDLANSQRAALAAWLEEYPDQLGIALTDCITMDAFLRDFGVEFASRYQGLRHDSGDPVEWGEKAIAHYEKLEIDPQSKTLVFSDNLDLRKAVELYRHFSSRVQLSFGIGTRLTCDIPQVKPLNIVIKLVECNGKPVAKLSDSPGKTICHDKAFVRALRKAFDLPHIKKAS</sequence>
<feature type="initiator methionine" description="Removed" evidence="1">
    <location>
        <position position="1"/>
    </location>
</feature>
<feature type="chain" id="PRO_0000205829" description="Nicotinate phosphoribosyltransferase">
    <location>
        <begin position="2"/>
        <end position="400"/>
    </location>
</feature>
<feature type="modified residue" description="Phosphohistidine; by autocatalysis" evidence="2">
    <location>
        <position position="220"/>
    </location>
</feature>
<organism>
    <name type="scientific">Escherichia coli O157:H7</name>
    <dbReference type="NCBI Taxonomy" id="83334"/>
    <lineage>
        <taxon>Bacteria</taxon>
        <taxon>Pseudomonadati</taxon>
        <taxon>Pseudomonadota</taxon>
        <taxon>Gammaproteobacteria</taxon>
        <taxon>Enterobacterales</taxon>
        <taxon>Enterobacteriaceae</taxon>
        <taxon>Escherichia</taxon>
    </lineage>
</organism>
<dbReference type="EC" id="6.3.4.21" evidence="2"/>
<dbReference type="EMBL" id="AE005174">
    <property type="protein sequence ID" value="AAG55416.1"/>
    <property type="molecule type" value="Genomic_DNA"/>
</dbReference>
<dbReference type="EMBL" id="BA000007">
    <property type="protein sequence ID" value="BAB34437.1"/>
    <property type="molecule type" value="Genomic_DNA"/>
</dbReference>
<dbReference type="PIR" id="D85619">
    <property type="entry name" value="D85619"/>
</dbReference>
<dbReference type="PIR" id="F90755">
    <property type="entry name" value="F90755"/>
</dbReference>
<dbReference type="RefSeq" id="NP_309041.1">
    <property type="nucleotide sequence ID" value="NC_002695.1"/>
</dbReference>
<dbReference type="RefSeq" id="WP_001301736.1">
    <property type="nucleotide sequence ID" value="NZ_VOAI01000006.1"/>
</dbReference>
<dbReference type="SMR" id="Q8XDE8"/>
<dbReference type="STRING" id="155864.Z1279"/>
<dbReference type="GeneID" id="917759"/>
<dbReference type="KEGG" id="ece:Z1279"/>
<dbReference type="KEGG" id="ecs:ECs_1014"/>
<dbReference type="PATRIC" id="fig|386585.9.peg.1135"/>
<dbReference type="eggNOG" id="COG1488">
    <property type="taxonomic scope" value="Bacteria"/>
</dbReference>
<dbReference type="HOGENOM" id="CLU_030991_1_0_6"/>
<dbReference type="OMA" id="IEHCLEY"/>
<dbReference type="UniPathway" id="UPA00253">
    <property type="reaction ID" value="UER00457"/>
</dbReference>
<dbReference type="Proteomes" id="UP000000558">
    <property type="component" value="Chromosome"/>
</dbReference>
<dbReference type="Proteomes" id="UP000002519">
    <property type="component" value="Chromosome"/>
</dbReference>
<dbReference type="GO" id="GO:0005829">
    <property type="term" value="C:cytosol"/>
    <property type="evidence" value="ECO:0007669"/>
    <property type="project" value="TreeGrafter"/>
</dbReference>
<dbReference type="GO" id="GO:0004516">
    <property type="term" value="F:nicotinate phosphoribosyltransferase activity"/>
    <property type="evidence" value="ECO:0007669"/>
    <property type="project" value="UniProtKB-UniRule"/>
</dbReference>
<dbReference type="GO" id="GO:0034355">
    <property type="term" value="P:NAD biosynthetic process via the salvage pathway"/>
    <property type="evidence" value="ECO:0007669"/>
    <property type="project" value="TreeGrafter"/>
</dbReference>
<dbReference type="CDD" id="cd01401">
    <property type="entry name" value="PncB_like"/>
    <property type="match status" value="1"/>
</dbReference>
<dbReference type="FunFam" id="3.20.140.10:FF:000001">
    <property type="entry name" value="Nicotinate phosphoribosyltransferase"/>
    <property type="match status" value="1"/>
</dbReference>
<dbReference type="Gene3D" id="3.20.140.10">
    <property type="entry name" value="nicotinate phosphoribosyltransferase"/>
    <property type="match status" value="1"/>
</dbReference>
<dbReference type="HAMAP" id="MF_00570">
    <property type="entry name" value="NAPRTase"/>
    <property type="match status" value="1"/>
</dbReference>
<dbReference type="InterPro" id="IPR041525">
    <property type="entry name" value="N/Namide_PRibTrfase"/>
</dbReference>
<dbReference type="InterPro" id="IPR040727">
    <property type="entry name" value="NAPRTase_N"/>
</dbReference>
<dbReference type="InterPro" id="IPR006406">
    <property type="entry name" value="Nic_PRibTrfase"/>
</dbReference>
<dbReference type="InterPro" id="IPR007229">
    <property type="entry name" value="Nic_PRibTrfase-Fam"/>
</dbReference>
<dbReference type="InterPro" id="IPR036068">
    <property type="entry name" value="Nicotinate_pribotase-like_C"/>
</dbReference>
<dbReference type="NCBIfam" id="TIGR01514">
    <property type="entry name" value="NAPRTase"/>
    <property type="match status" value="1"/>
</dbReference>
<dbReference type="NCBIfam" id="NF003704">
    <property type="entry name" value="PRK05321.1"/>
    <property type="match status" value="1"/>
</dbReference>
<dbReference type="PANTHER" id="PTHR11098">
    <property type="entry name" value="NICOTINATE PHOSPHORIBOSYLTRANSFERASE"/>
    <property type="match status" value="1"/>
</dbReference>
<dbReference type="PANTHER" id="PTHR11098:SF1">
    <property type="entry name" value="NICOTINATE PHOSPHORIBOSYLTRANSFERASE"/>
    <property type="match status" value="1"/>
</dbReference>
<dbReference type="Pfam" id="PF04095">
    <property type="entry name" value="NAPRTase"/>
    <property type="match status" value="1"/>
</dbReference>
<dbReference type="Pfam" id="PF17767">
    <property type="entry name" value="NAPRTase_N"/>
    <property type="match status" value="1"/>
</dbReference>
<dbReference type="PIRSF" id="PIRSF000484">
    <property type="entry name" value="NAPRT"/>
    <property type="match status" value="1"/>
</dbReference>
<dbReference type="SUPFAM" id="SSF51690">
    <property type="entry name" value="Nicotinate/Quinolinate PRTase C-terminal domain-like"/>
    <property type="match status" value="1"/>
</dbReference>
<dbReference type="SUPFAM" id="SSF54675">
    <property type="entry name" value="Nicotinate/Quinolinate PRTase N-terminal domain-like"/>
    <property type="match status" value="1"/>
</dbReference>
<reference key="1">
    <citation type="journal article" date="2001" name="Nature">
        <title>Genome sequence of enterohaemorrhagic Escherichia coli O157:H7.</title>
        <authorList>
            <person name="Perna N.T."/>
            <person name="Plunkett G. III"/>
            <person name="Burland V."/>
            <person name="Mau B."/>
            <person name="Glasner J.D."/>
            <person name="Rose D.J."/>
            <person name="Mayhew G.F."/>
            <person name="Evans P.S."/>
            <person name="Gregor J."/>
            <person name="Kirkpatrick H.A."/>
            <person name="Posfai G."/>
            <person name="Hackett J."/>
            <person name="Klink S."/>
            <person name="Boutin A."/>
            <person name="Shao Y."/>
            <person name="Miller L."/>
            <person name="Grotbeck E.J."/>
            <person name="Davis N.W."/>
            <person name="Lim A."/>
            <person name="Dimalanta E.T."/>
            <person name="Potamousis K."/>
            <person name="Apodaca J."/>
            <person name="Anantharaman T.S."/>
            <person name="Lin J."/>
            <person name="Yen G."/>
            <person name="Schwartz D.C."/>
            <person name="Welch R.A."/>
            <person name="Blattner F.R."/>
        </authorList>
    </citation>
    <scope>NUCLEOTIDE SEQUENCE [LARGE SCALE GENOMIC DNA]</scope>
    <source>
        <strain>O157:H7 / EDL933 / ATCC 700927 / EHEC</strain>
    </source>
</reference>
<reference key="2">
    <citation type="journal article" date="2001" name="DNA Res.">
        <title>Complete genome sequence of enterohemorrhagic Escherichia coli O157:H7 and genomic comparison with a laboratory strain K-12.</title>
        <authorList>
            <person name="Hayashi T."/>
            <person name="Makino K."/>
            <person name="Ohnishi M."/>
            <person name="Kurokawa K."/>
            <person name="Ishii K."/>
            <person name="Yokoyama K."/>
            <person name="Han C.-G."/>
            <person name="Ohtsubo E."/>
            <person name="Nakayama K."/>
            <person name="Murata T."/>
            <person name="Tanaka M."/>
            <person name="Tobe T."/>
            <person name="Iida T."/>
            <person name="Takami H."/>
            <person name="Honda T."/>
            <person name="Sasakawa C."/>
            <person name="Ogasawara N."/>
            <person name="Yasunaga T."/>
            <person name="Kuhara S."/>
            <person name="Shiba T."/>
            <person name="Hattori M."/>
            <person name="Shinagawa H."/>
        </authorList>
    </citation>
    <scope>NUCLEOTIDE SEQUENCE [LARGE SCALE GENOMIC DNA]</scope>
    <source>
        <strain>O157:H7 / Sakai / RIMD 0509952 / EHEC</strain>
    </source>
</reference>